<organism>
    <name type="scientific">Parafrankia sp. (strain EAN1pec)</name>
    <dbReference type="NCBI Taxonomy" id="298653"/>
    <lineage>
        <taxon>Bacteria</taxon>
        <taxon>Bacillati</taxon>
        <taxon>Actinomycetota</taxon>
        <taxon>Actinomycetes</taxon>
        <taxon>Frankiales</taxon>
        <taxon>Frankiaceae</taxon>
        <taxon>Parafrankia</taxon>
    </lineage>
</organism>
<protein>
    <recommendedName>
        <fullName evidence="1">Large ribosomal subunit protein bL12</fullName>
    </recommendedName>
    <alternativeName>
        <fullName evidence="2">50S ribosomal protein L7/L12</fullName>
    </alternativeName>
</protein>
<sequence length="130" mass="13413">MAKLSTDELLDAFKEMTLLELSEFVKQFEDTFGVTAAAPVAIAAGPVAGGAGGEAAAVEEQDEFDVILESVGDKKIQVIKEVRALTSLGLKEAKDLVDGAPKPVLEKVAKEAADKAKAALEGAGATVTVK</sequence>
<feature type="chain" id="PRO_1000121441" description="Large ribosomal subunit protein bL12">
    <location>
        <begin position="1"/>
        <end position="130"/>
    </location>
</feature>
<reference key="1">
    <citation type="journal article" date="2007" name="Genome Res.">
        <title>Genome characteristics of facultatively symbiotic Frankia sp. strains reflect host range and host plant biogeography.</title>
        <authorList>
            <person name="Normand P."/>
            <person name="Lapierre P."/>
            <person name="Tisa L.S."/>
            <person name="Gogarten J.P."/>
            <person name="Alloisio N."/>
            <person name="Bagnarol E."/>
            <person name="Bassi C.A."/>
            <person name="Berry A.M."/>
            <person name="Bickhart D.M."/>
            <person name="Choisne N."/>
            <person name="Couloux A."/>
            <person name="Cournoyer B."/>
            <person name="Cruveiller S."/>
            <person name="Daubin V."/>
            <person name="Demange N."/>
            <person name="Francino M.P."/>
            <person name="Goltsman E."/>
            <person name="Huang Y."/>
            <person name="Kopp O.R."/>
            <person name="Labarre L."/>
            <person name="Lapidus A."/>
            <person name="Lavire C."/>
            <person name="Marechal J."/>
            <person name="Martinez M."/>
            <person name="Mastronunzio J.E."/>
            <person name="Mullin B.C."/>
            <person name="Niemann J."/>
            <person name="Pujic P."/>
            <person name="Rawnsley T."/>
            <person name="Rouy Z."/>
            <person name="Schenowitz C."/>
            <person name="Sellstedt A."/>
            <person name="Tavares F."/>
            <person name="Tomkins J.P."/>
            <person name="Vallenet D."/>
            <person name="Valverde C."/>
            <person name="Wall L.G."/>
            <person name="Wang Y."/>
            <person name="Medigue C."/>
            <person name="Benson D.R."/>
        </authorList>
    </citation>
    <scope>NUCLEOTIDE SEQUENCE [LARGE SCALE GENOMIC DNA]</scope>
    <source>
        <strain>EAN1pec</strain>
    </source>
</reference>
<comment type="function">
    <text evidence="1">Forms part of the ribosomal stalk which helps the ribosome interact with GTP-bound translation factors. Is thus essential for accurate translation.</text>
</comment>
<comment type="subunit">
    <text evidence="1">Homodimer. Part of the ribosomal stalk of the 50S ribosomal subunit. Forms a multimeric L10(L12)X complex, where L10 forms an elongated spine to which 2 to 4 L12 dimers bind in a sequential fashion. Binds GTP-bound translation factors.</text>
</comment>
<comment type="similarity">
    <text evidence="1">Belongs to the bacterial ribosomal protein bL12 family.</text>
</comment>
<proteinExistence type="inferred from homology"/>
<accession>A8LC65</accession>
<keyword id="KW-0687">Ribonucleoprotein</keyword>
<keyword id="KW-0689">Ribosomal protein</keyword>
<dbReference type="EMBL" id="CP000820">
    <property type="protein sequence ID" value="ABW15402.1"/>
    <property type="molecule type" value="Genomic_DNA"/>
</dbReference>
<dbReference type="RefSeq" id="WP_020463485.1">
    <property type="nucleotide sequence ID" value="NC_009921.1"/>
</dbReference>
<dbReference type="SMR" id="A8LC65"/>
<dbReference type="STRING" id="298653.Franean1_6058"/>
<dbReference type="KEGG" id="fre:Franean1_6058"/>
<dbReference type="eggNOG" id="COG0222">
    <property type="taxonomic scope" value="Bacteria"/>
</dbReference>
<dbReference type="HOGENOM" id="CLU_086499_3_0_11"/>
<dbReference type="GO" id="GO:0022625">
    <property type="term" value="C:cytosolic large ribosomal subunit"/>
    <property type="evidence" value="ECO:0007669"/>
    <property type="project" value="TreeGrafter"/>
</dbReference>
<dbReference type="GO" id="GO:0003729">
    <property type="term" value="F:mRNA binding"/>
    <property type="evidence" value="ECO:0007669"/>
    <property type="project" value="TreeGrafter"/>
</dbReference>
<dbReference type="GO" id="GO:0003735">
    <property type="term" value="F:structural constituent of ribosome"/>
    <property type="evidence" value="ECO:0007669"/>
    <property type="project" value="InterPro"/>
</dbReference>
<dbReference type="GO" id="GO:0006412">
    <property type="term" value="P:translation"/>
    <property type="evidence" value="ECO:0007669"/>
    <property type="project" value="UniProtKB-UniRule"/>
</dbReference>
<dbReference type="CDD" id="cd00387">
    <property type="entry name" value="Ribosomal_L7_L12"/>
    <property type="match status" value="1"/>
</dbReference>
<dbReference type="FunFam" id="1.20.5.710:FF:000005">
    <property type="entry name" value="50S ribosomal protein L7/L12"/>
    <property type="match status" value="1"/>
</dbReference>
<dbReference type="FunFam" id="3.30.1390.10:FF:000001">
    <property type="entry name" value="50S ribosomal protein L7/L12"/>
    <property type="match status" value="1"/>
</dbReference>
<dbReference type="Gene3D" id="3.30.1390.10">
    <property type="match status" value="1"/>
</dbReference>
<dbReference type="Gene3D" id="1.20.5.710">
    <property type="entry name" value="Single helix bin"/>
    <property type="match status" value="1"/>
</dbReference>
<dbReference type="HAMAP" id="MF_00368">
    <property type="entry name" value="Ribosomal_bL12"/>
    <property type="match status" value="1"/>
</dbReference>
<dbReference type="InterPro" id="IPR000206">
    <property type="entry name" value="Ribosomal_bL12"/>
</dbReference>
<dbReference type="InterPro" id="IPR013823">
    <property type="entry name" value="Ribosomal_bL12_C"/>
</dbReference>
<dbReference type="InterPro" id="IPR014719">
    <property type="entry name" value="Ribosomal_bL12_C/ClpS-like"/>
</dbReference>
<dbReference type="InterPro" id="IPR008932">
    <property type="entry name" value="Ribosomal_bL12_oligo"/>
</dbReference>
<dbReference type="InterPro" id="IPR036235">
    <property type="entry name" value="Ribosomal_bL12_oligo_N_sf"/>
</dbReference>
<dbReference type="NCBIfam" id="TIGR00855">
    <property type="entry name" value="L12"/>
    <property type="match status" value="1"/>
</dbReference>
<dbReference type="PANTHER" id="PTHR45987">
    <property type="entry name" value="39S RIBOSOMAL PROTEIN L12"/>
    <property type="match status" value="1"/>
</dbReference>
<dbReference type="PANTHER" id="PTHR45987:SF4">
    <property type="entry name" value="LARGE RIBOSOMAL SUBUNIT PROTEIN BL12M"/>
    <property type="match status" value="1"/>
</dbReference>
<dbReference type="Pfam" id="PF00542">
    <property type="entry name" value="Ribosomal_L12"/>
    <property type="match status" value="1"/>
</dbReference>
<dbReference type="Pfam" id="PF16320">
    <property type="entry name" value="Ribosomal_L12_N"/>
    <property type="match status" value="1"/>
</dbReference>
<dbReference type="SUPFAM" id="SSF54736">
    <property type="entry name" value="ClpS-like"/>
    <property type="match status" value="1"/>
</dbReference>
<dbReference type="SUPFAM" id="SSF48300">
    <property type="entry name" value="Ribosomal protein L7/12, oligomerisation (N-terminal) domain"/>
    <property type="match status" value="1"/>
</dbReference>
<name>RL7_PARS2</name>
<gene>
    <name evidence="1" type="primary">rplL</name>
    <name type="ordered locus">Franean1_6058</name>
</gene>
<evidence type="ECO:0000255" key="1">
    <source>
        <dbReference type="HAMAP-Rule" id="MF_00368"/>
    </source>
</evidence>
<evidence type="ECO:0000305" key="2"/>